<feature type="chain" id="PRO_0000237672" description="Exportin-4">
    <location>
        <begin position="1"/>
        <end position="1150"/>
    </location>
</feature>
<proteinExistence type="evidence at transcript level"/>
<organism>
    <name type="scientific">Xenopus laevis</name>
    <name type="common">African clawed frog</name>
    <dbReference type="NCBI Taxonomy" id="8355"/>
    <lineage>
        <taxon>Eukaryota</taxon>
        <taxon>Metazoa</taxon>
        <taxon>Chordata</taxon>
        <taxon>Craniata</taxon>
        <taxon>Vertebrata</taxon>
        <taxon>Euteleostomi</taxon>
        <taxon>Amphibia</taxon>
        <taxon>Batrachia</taxon>
        <taxon>Anura</taxon>
        <taxon>Pipoidea</taxon>
        <taxon>Pipidae</taxon>
        <taxon>Xenopodinae</taxon>
        <taxon>Xenopus</taxon>
        <taxon>Xenopus</taxon>
    </lineage>
</organism>
<sequence length="1150" mass="130095">MMAALGASEVIAQLESAAKVLMAPPSMVNNEQRQHAEHVFLSFRKSKSPFAVCKHILETSKVDYVLFQAATAIMEAVVREWILLEKSSIESLRTFLLTYVLQRPNLQKYVREQILLAVAVIVKRGSLDKSIDCKSIFHEVSQLISSCNPTMQTLACSILTALLIEFSSSSKTSNIGLSMEFHGSCKRVFQDEDLRRIFMLTIEVLQEFSRRENLNAQMSSVFQRYLALANQVLSWNFLPPNLGRHYIAMFESSQNVMLKPTESWRETLLNSRVMELFFTVHRKIREDSDMAQDSLQCLAQLASLHGPIFPDERSQVDYLAHFIEGLLSTINGIEIEDSEAVGISNIISNLITVFPRNILTAIPSDLFSSFVNCLTHLTCSFGRSAALEEVLDKDDMVYMEAYDKLLESWLTLVQDDQHFHKGFFTQHAVQVFNSYIQCHLAAPDGTRNLTANGVASREEEEINEIQEDDRDLFSDQLASVGMLGRIASDHCIPLLTSLLEERVTRLHGQLQRHQQQLLASPGADSIDNKVLDDLYEDIHWLILVTGYLLADDTQGETPLIPSEIMEYSIKQSTEVDINTTLQILGSPGEKASSIPGCNRTDSVIRLVSAVLRASEVESRATRADLTHLLSPQMGKDIVWFLKRWTKTYLLVDEKLYDQISLPFNTAFGADTEGCHWIIGYLLEKVISNLSVWSSEQELANETVQLLVTLVERRERANLVIQCENWWNLAKQFAQRSPPLNFLSSSVQRTLMKALVLGGFAHMDSDTKQQYWTEVLQPLQQRFLNVINQENFQQICQEEEVKQEITATLEALCGIAEATQIDNVAILFNFLMDFLTNCIGLMEVYKNNPETVNLIIEVFVEVAHKQICYLGESKAMNLYEACLTLLQVYSKNNLGRKRIDVTAEEDQYQDLLLIMELLTNLLSKEFIDFSDTDEVFRPHEPGQATNRPVSAADVVLYGVNIVLPLMSQDLLKFPSLCNQYYKLITFICEIFPEKIPLLPEDLFKSLMYSLELGMTSMSSEVSQLCLEALTPLAEQCAKAQDTDSPLLAAMRHFLKLVFDMLVLQKHNTEMTTAAGEAFYTLVCLNQAEYAELVETLLSSQQDPLIYQRLADAFNKLTASSTPPTLDRKQKMSFLKSLEEFMGNVGGLLCVK</sequence>
<comment type="function">
    <text evidence="1">Mediates the nuclear export of proteins (cargos) with broad substrate specificity.</text>
</comment>
<comment type="subcellular location">
    <subcellularLocation>
        <location evidence="1">Cytoplasm</location>
    </subcellularLocation>
    <subcellularLocation>
        <location evidence="1">Nucleus</location>
    </subcellularLocation>
</comment>
<comment type="similarity">
    <text evidence="2">Belongs to the exportin family.</text>
</comment>
<name>XPO4_XENLA</name>
<gene>
    <name type="primary">xpo4</name>
</gene>
<protein>
    <recommendedName>
        <fullName>Exportin-4</fullName>
    </recommendedName>
</protein>
<evidence type="ECO:0000250" key="1"/>
<evidence type="ECO:0000305" key="2"/>
<dbReference type="EMBL" id="BC099668">
    <property type="protein sequence ID" value="AAH99668.1"/>
    <property type="molecule type" value="mRNA"/>
</dbReference>
<dbReference type="RefSeq" id="NP_001089644.1">
    <property type="nucleotide sequence ID" value="NM_001096175.1"/>
</dbReference>
<dbReference type="SMR" id="Q499Y0"/>
<dbReference type="GeneID" id="734704"/>
<dbReference type="KEGG" id="xla:734704"/>
<dbReference type="AGR" id="Xenbase:XB-GENE-990879"/>
<dbReference type="CTD" id="734704"/>
<dbReference type="Xenbase" id="XB-GENE-990879">
    <property type="gene designation" value="xpo4.L"/>
</dbReference>
<dbReference type="OMA" id="SKWETNH"/>
<dbReference type="OrthoDB" id="5548448at2759"/>
<dbReference type="Proteomes" id="UP000186698">
    <property type="component" value="Chromosome 2L"/>
</dbReference>
<dbReference type="Bgee" id="734704">
    <property type="expression patterns" value="Expressed in heart and 19 other cell types or tissues"/>
</dbReference>
<dbReference type="GO" id="GO:0005737">
    <property type="term" value="C:cytoplasm"/>
    <property type="evidence" value="ECO:0000318"/>
    <property type="project" value="GO_Central"/>
</dbReference>
<dbReference type="GO" id="GO:0005643">
    <property type="term" value="C:nuclear pore"/>
    <property type="evidence" value="ECO:0000318"/>
    <property type="project" value="GO_Central"/>
</dbReference>
<dbReference type="GO" id="GO:0005049">
    <property type="term" value="F:nuclear export signal receptor activity"/>
    <property type="evidence" value="ECO:0000318"/>
    <property type="project" value="GO_Central"/>
</dbReference>
<dbReference type="GO" id="GO:0006611">
    <property type="term" value="P:protein export from nucleus"/>
    <property type="evidence" value="ECO:0000318"/>
    <property type="project" value="GO_Central"/>
</dbReference>
<dbReference type="FunFam" id="1.25.10.10:FF:000077">
    <property type="entry name" value="Exportin 4"/>
    <property type="match status" value="1"/>
</dbReference>
<dbReference type="FunFam" id="1.25.10.10:FF:000130">
    <property type="entry name" value="Exportin 4"/>
    <property type="match status" value="1"/>
</dbReference>
<dbReference type="Gene3D" id="1.25.10.10">
    <property type="entry name" value="Leucine-rich Repeat Variant"/>
    <property type="match status" value="2"/>
</dbReference>
<dbReference type="InterPro" id="IPR011989">
    <property type="entry name" value="ARM-like"/>
</dbReference>
<dbReference type="InterPro" id="IPR016024">
    <property type="entry name" value="ARM-type_fold"/>
</dbReference>
<dbReference type="InterPro" id="IPR044189">
    <property type="entry name" value="XPO4/7-like"/>
</dbReference>
<dbReference type="PANTHER" id="PTHR12596">
    <property type="entry name" value="EXPORTIN 4,7-RELATED"/>
    <property type="match status" value="1"/>
</dbReference>
<dbReference type="PANTHER" id="PTHR12596:SF1">
    <property type="entry name" value="EXPORTIN-4"/>
    <property type="match status" value="1"/>
</dbReference>
<dbReference type="SUPFAM" id="SSF48371">
    <property type="entry name" value="ARM repeat"/>
    <property type="match status" value="1"/>
</dbReference>
<reference key="1">
    <citation type="submission" date="2005-07" db="EMBL/GenBank/DDBJ databases">
        <authorList>
            <consortium name="NIH - Xenopus Gene Collection (XGC) project"/>
        </authorList>
    </citation>
    <scope>NUCLEOTIDE SEQUENCE [LARGE SCALE MRNA]</scope>
    <source>
        <tissue>Oocyte</tissue>
    </source>
</reference>
<keyword id="KW-0963">Cytoplasm</keyword>
<keyword id="KW-0539">Nucleus</keyword>
<keyword id="KW-0653">Protein transport</keyword>
<keyword id="KW-1185">Reference proteome</keyword>
<keyword id="KW-0813">Transport</keyword>
<accession>Q499Y0</accession>